<feature type="chain" id="PRO_0000448489" description="Short-chain dehydrogenase TIC 32 A, chloroplastic">
    <location>
        <begin position="1"/>
        <end position="320"/>
    </location>
</feature>
<feature type="region of interest" description="Interaction with calmodulin" evidence="2">
    <location>
        <begin position="301"/>
        <end position="317"/>
    </location>
</feature>
<feature type="active site" description="Proton acceptor" evidence="1">
    <location>
        <position position="196"/>
    </location>
</feature>
<feature type="binding site" evidence="3">
    <location>
        <begin position="40"/>
        <end position="46"/>
    </location>
    <ligand>
        <name>NADP(+)</name>
        <dbReference type="ChEBI" id="CHEBI:58349"/>
    </ligand>
</feature>
<feature type="binding site" evidence="3">
    <location>
        <begin position="92"/>
        <end position="93"/>
    </location>
    <ligand>
        <name>NADP(+)</name>
        <dbReference type="ChEBI" id="CHEBI:58349"/>
    </ligand>
</feature>
<feature type="binding site" evidence="3">
    <location>
        <position position="119"/>
    </location>
    <ligand>
        <name>NADP(+)</name>
        <dbReference type="ChEBI" id="CHEBI:58349"/>
    </ligand>
</feature>
<feature type="binding site" evidence="3">
    <location>
        <position position="140"/>
    </location>
    <ligand>
        <name>NADP(+)</name>
        <dbReference type="ChEBI" id="CHEBI:58349"/>
    </ligand>
</feature>
<feature type="binding site" evidence="3">
    <location>
        <position position="174"/>
    </location>
    <ligand>
        <name>substrate</name>
    </ligand>
</feature>
<feature type="sequence conflict" description="In Ref. 1; CAB58175 and 2; CAA02476." evidence="6" ref="1 2">
    <original>I</original>
    <variation>T</variation>
    <location>
        <position position="300"/>
    </location>
</feature>
<sequence length="320" mass="34923">MEIYGMVTGKAGKSGYGSASTAEDVTHSIDAKHLTAIITGGTSGIGLEAARVLGMRGAHVIIASRNTKAANDSKEMILQMYPNARIDCLQLDLSSIKSVRSFIHQFLALNVPLNILINNAGVMFCPFQLSEDGIESQFATNHIGHFLLTNLLLDKMKSSARESGIEGRIVNLSSIAHTYTYTEGIMFDYINDPDRYSEKKAYGQSKLANLLHSNALSRKLQEEGVNITINSVHPGLITTNLFRHSGLGMAVLKAMSFFLWKNIPQGAATTCYVALHPDLKDVTGKYFADCNVTTPSNFAIDTTLADKLWDFSIKLVESLP</sequence>
<protein>
    <recommendedName>
        <fullName evidence="6">Short-chain dehydrogenase TIC 32 A, chloroplastic</fullName>
        <ecNumber evidence="6">1.1.1.-</ecNumber>
    </recommendedName>
    <alternativeName>
        <fullName evidence="5">Pod-specific dehydrogenase SAC25</fullName>
    </alternativeName>
    <alternativeName>
        <fullName evidence="6">Translocon at the inner envelope membrane of chloroplasts 32 A</fullName>
        <shortName evidence="6">BnTIC32A</shortName>
    </alternativeName>
</protein>
<organism>
    <name type="scientific">Brassica napus</name>
    <name type="common">Rape</name>
    <dbReference type="NCBI Taxonomy" id="3708"/>
    <lineage>
        <taxon>Eukaryota</taxon>
        <taxon>Viridiplantae</taxon>
        <taxon>Streptophyta</taxon>
        <taxon>Embryophyta</taxon>
        <taxon>Tracheophyta</taxon>
        <taxon>Spermatophyta</taxon>
        <taxon>Magnoliopsida</taxon>
        <taxon>eudicotyledons</taxon>
        <taxon>Gunneridae</taxon>
        <taxon>Pentapetalae</taxon>
        <taxon>rosids</taxon>
        <taxon>malvids</taxon>
        <taxon>Brassicales</taxon>
        <taxon>Brassicaceae</taxon>
        <taxon>Brassiceae</taxon>
        <taxon>Brassica</taxon>
    </lineage>
</organism>
<comment type="function">
    <text evidence="2 7 8">Involved in protein precursor import into chloroplasts (By similarity). Maybe involved in pod abscission or dehiscence (pod shatter) (Probable).</text>
</comment>
<comment type="subunit">
    <text evidence="2">Part of the Tic complex.</text>
</comment>
<comment type="subcellular location">
    <subcellularLocation>
        <location evidence="2">Plastid</location>
        <location evidence="2">Chloroplast inner membrane</location>
    </subcellularLocation>
</comment>
<comment type="tissue specificity">
    <text evidence="4">Expressed in the dehiscence zone of developing pods.</text>
</comment>
<comment type="developmental stage">
    <text evidence="4">Accumulates during pod development.</text>
</comment>
<comment type="similarity">
    <text evidence="6">Belongs to the short-chain dehydrogenases/reductases (SDR) family.</text>
</comment>
<dbReference type="EC" id="1.1.1.-" evidence="6"/>
<dbReference type="EMBL" id="X74225">
    <property type="protein sequence ID" value="CAB58175.1"/>
    <property type="molecule type" value="mRNA"/>
</dbReference>
<dbReference type="EMBL" id="A40116">
    <property type="protein sequence ID" value="CAA02476.1"/>
    <property type="molecule type" value="Unassigned_DNA"/>
</dbReference>
<dbReference type="EMBL" id="LK033133">
    <property type="protein sequence ID" value="CDY52817.1"/>
    <property type="molecule type" value="Genomic_DNA"/>
</dbReference>
<dbReference type="PIR" id="S42651">
    <property type="entry name" value="S42651"/>
</dbReference>
<dbReference type="RefSeq" id="NP_001302998.1">
    <property type="nucleotide sequence ID" value="NM_001316069.1"/>
</dbReference>
<dbReference type="SMR" id="A0A078IS66"/>
<dbReference type="STRING" id="3708.A0A078IS66"/>
<dbReference type="PaxDb" id="3708-A0A078IS66"/>
<dbReference type="EnsemblPlants" id="CDY52817">
    <property type="protein sequence ID" value="CDY52817"/>
    <property type="gene ID" value="GSBRNA2T00007891001"/>
</dbReference>
<dbReference type="GeneID" id="106397857"/>
<dbReference type="Gramene" id="CDY52817">
    <property type="protein sequence ID" value="CDY52817"/>
    <property type="gene ID" value="GSBRNA2T00007891001"/>
</dbReference>
<dbReference type="KEGG" id="bna:106397857"/>
<dbReference type="OMA" id="EGIWSKY"/>
<dbReference type="OrthoDB" id="191139at2759"/>
<dbReference type="Proteomes" id="UP000028999">
    <property type="component" value="Unassembled WGS sequence"/>
</dbReference>
<dbReference type="GO" id="GO:0009706">
    <property type="term" value="C:chloroplast inner membrane"/>
    <property type="evidence" value="ECO:0007669"/>
    <property type="project" value="UniProtKB-SubCell"/>
</dbReference>
<dbReference type="GO" id="GO:0005516">
    <property type="term" value="F:calmodulin binding"/>
    <property type="evidence" value="ECO:0007669"/>
    <property type="project" value="UniProtKB-KW"/>
</dbReference>
<dbReference type="GO" id="GO:0016491">
    <property type="term" value="F:oxidoreductase activity"/>
    <property type="evidence" value="ECO:0007669"/>
    <property type="project" value="UniProtKB-KW"/>
</dbReference>
<dbReference type="GO" id="GO:0015031">
    <property type="term" value="P:protein transport"/>
    <property type="evidence" value="ECO:0007669"/>
    <property type="project" value="UniProtKB-KW"/>
</dbReference>
<dbReference type="CDD" id="cd05327">
    <property type="entry name" value="retinol-DH_like_SDR_c_like"/>
    <property type="match status" value="1"/>
</dbReference>
<dbReference type="Gene3D" id="3.40.50.720">
    <property type="entry name" value="NAD(P)-binding Rossmann-like Domain"/>
    <property type="match status" value="1"/>
</dbReference>
<dbReference type="InterPro" id="IPR036291">
    <property type="entry name" value="NAD(P)-bd_dom_sf"/>
</dbReference>
<dbReference type="InterPro" id="IPR002347">
    <property type="entry name" value="SDR_fam"/>
</dbReference>
<dbReference type="InterPro" id="IPR055280">
    <property type="entry name" value="TIC32"/>
</dbReference>
<dbReference type="PANTHER" id="PTHR48476">
    <property type="entry name" value="SHORT-CHAIN DEHYDROGENASE TIC 32, CHLOROPLASTIC-LIKE"/>
    <property type="match status" value="1"/>
</dbReference>
<dbReference type="PANTHER" id="PTHR48476:SF1">
    <property type="entry name" value="SHORT-CHAIN DEHYDROGENASE TIC 32, CHLOROPLASTIC-LIKE"/>
    <property type="match status" value="1"/>
</dbReference>
<dbReference type="Pfam" id="PF00106">
    <property type="entry name" value="adh_short"/>
    <property type="match status" value="1"/>
</dbReference>
<dbReference type="PRINTS" id="PR00081">
    <property type="entry name" value="GDHRDH"/>
</dbReference>
<dbReference type="PRINTS" id="PR00080">
    <property type="entry name" value="SDRFAMILY"/>
</dbReference>
<dbReference type="SUPFAM" id="SSF51735">
    <property type="entry name" value="NAD(P)-binding Rossmann-fold domains"/>
    <property type="match status" value="1"/>
</dbReference>
<proteinExistence type="evidence at transcript level"/>
<accession>A0A078IS66</accession>
<accession>P81259</accession>
<accession>Q7DM16</accession>
<keyword id="KW-0112">Calmodulin-binding</keyword>
<keyword id="KW-0150">Chloroplast</keyword>
<keyword id="KW-0472">Membrane</keyword>
<keyword id="KW-0521">NADP</keyword>
<keyword id="KW-0560">Oxidoreductase</keyword>
<keyword id="KW-0934">Plastid</keyword>
<keyword id="KW-1001">Plastid inner membrane</keyword>
<keyword id="KW-0653">Protein transport</keyword>
<keyword id="KW-1185">Reference proteome</keyword>
<keyword id="KW-0813">Transport</keyword>
<gene>
    <name evidence="6" type="primary">TIC32A</name>
    <name evidence="9" type="synonym">BnaC04g53640D</name>
    <name evidence="5" type="synonym">SAC25</name>
    <name evidence="9" type="ORF">GSBRNA2T00007891001</name>
</gene>
<evidence type="ECO:0000250" key="1">
    <source>
        <dbReference type="UniProtKB" id="P00334"/>
    </source>
</evidence>
<evidence type="ECO:0000250" key="2">
    <source>
        <dbReference type="UniProtKB" id="Q6RVV4"/>
    </source>
</evidence>
<evidence type="ECO:0000250" key="3">
    <source>
        <dbReference type="UniProtKB" id="Q8KES3"/>
    </source>
</evidence>
<evidence type="ECO:0000269" key="4">
    <source>
    </source>
</evidence>
<evidence type="ECO:0000303" key="5">
    <source>
    </source>
</evidence>
<evidence type="ECO:0000305" key="6"/>
<evidence type="ECO:0000305" key="7">
    <source>
    </source>
</evidence>
<evidence type="ECO:0000305" key="8">
    <source ref="2"/>
</evidence>
<evidence type="ECO:0000312" key="9">
    <source>
        <dbReference type="EMBL" id="CDY52817.1"/>
    </source>
</evidence>
<name>TC32A_BRANA</name>
<reference key="1">
    <citation type="journal article" date="1994" name="Plant Mol. Biol.">
        <title>Characterization of a mRNA that accumulates during development of oilseed rape pods.</title>
        <authorList>
            <person name="Coupe S.A."/>
            <person name="Taylor J.E."/>
            <person name="Isaac P.G."/>
            <person name="Roberts J.A."/>
        </authorList>
    </citation>
    <scope>NUCLEOTIDE SEQUENCE [MRNA]</scope>
    <scope>FUNCTION</scope>
    <scope>TISSUE SPECIFICITY</scope>
    <scope>DEVELOPMENTAL STAGE</scope>
    <source>
        <strain>cv. Rafal</strain>
        <tissue>Pod</tissue>
    </source>
</reference>
<reference key="2">
    <citation type="patent" date="1994-10-13" number="WO9423043">
        <title>CONTROL OF PLANT ABSCISSION AND POD DEHISCENCE.</title>
        <authorList>
            <person name="Isaac P.G."/>
            <person name="Roberts J.A."/>
            <person name="Coupe S.A."/>
        </authorList>
    </citation>
    <scope>NUCLEOTIDE SEQUENCE</scope>
    <scope>FUNCTION</scope>
</reference>
<reference key="3">
    <citation type="journal article" date="2014" name="Science">
        <title>Plant genetics. Early allopolyploid evolution in the post-Neolithic Brassica napus oilseed genome.</title>
        <authorList>
            <person name="Chalhoub B."/>
            <person name="Denoeud F."/>
            <person name="Liu S."/>
            <person name="Parkin I.A."/>
            <person name="Tang H."/>
            <person name="Wang X."/>
            <person name="Chiquet J."/>
            <person name="Belcram H."/>
            <person name="Tong C."/>
            <person name="Samans B."/>
            <person name="Correa M."/>
            <person name="Da Silva C."/>
            <person name="Just J."/>
            <person name="Falentin C."/>
            <person name="Koh C.S."/>
            <person name="Le Clainche I."/>
            <person name="Bernard M."/>
            <person name="Bento P."/>
            <person name="Noel B."/>
            <person name="Labadie K."/>
            <person name="Alberti A."/>
            <person name="Charles M."/>
            <person name="Arnaud D."/>
            <person name="Guo H."/>
            <person name="Daviaud C."/>
            <person name="Alamery S."/>
            <person name="Jabbari K."/>
            <person name="Zhao M."/>
            <person name="Edger P.P."/>
            <person name="Chelaifa H."/>
            <person name="Tack D."/>
            <person name="Lassalle G."/>
            <person name="Mestiri I."/>
            <person name="Schnel N."/>
            <person name="Le Paslier M.C."/>
            <person name="Fan G."/>
            <person name="Renault V."/>
            <person name="Bayer P.E."/>
            <person name="Golicz A.A."/>
            <person name="Manoli S."/>
            <person name="Lee T.H."/>
            <person name="Thi V.H."/>
            <person name="Chalabi S."/>
            <person name="Hu Q."/>
            <person name="Fan C."/>
            <person name="Tollenaere R."/>
            <person name="Lu Y."/>
            <person name="Battail C."/>
            <person name="Shen J."/>
            <person name="Sidebottom C.H."/>
            <person name="Wang X."/>
            <person name="Canaguier A."/>
            <person name="Chauveau A."/>
            <person name="Berard A."/>
            <person name="Deniot G."/>
            <person name="Guan M."/>
            <person name="Liu Z."/>
            <person name="Sun F."/>
            <person name="Lim Y.P."/>
            <person name="Lyons E."/>
            <person name="Town C.D."/>
            <person name="Bancroft I."/>
            <person name="Wang X."/>
            <person name="Meng J."/>
            <person name="Ma J."/>
            <person name="Pires J.C."/>
            <person name="King G.J."/>
            <person name="Brunel D."/>
            <person name="Delourme R."/>
            <person name="Renard M."/>
            <person name="Aury J.M."/>
            <person name="Adams K.L."/>
            <person name="Batley J."/>
            <person name="Snowdon R.J."/>
            <person name="Tost J."/>
            <person name="Edwards D."/>
            <person name="Zhou Y."/>
            <person name="Hua W."/>
            <person name="Sharpe A.G."/>
            <person name="Paterson A.H."/>
            <person name="Guan C."/>
            <person name="Wincker P."/>
        </authorList>
    </citation>
    <scope>NUCLEOTIDE SEQUENCE [LARGE SCALE GENOMIC DNA]</scope>
    <source>
        <strain>cv. Darmor-bzh</strain>
    </source>
</reference>